<proteinExistence type="evidence at protein level"/>
<keyword id="KW-0217">Developmental protein</keyword>
<keyword id="KW-0265">Erythrocyte maturation</keyword>
<keyword id="KW-0472">Membrane</keyword>
<keyword id="KW-0539">Nucleus</keyword>
<keyword id="KW-1185">Reference proteome</keyword>
<keyword id="KW-0732">Signal</keyword>
<keyword id="KW-0812">Transmembrane</keyword>
<keyword id="KW-1133">Transmembrane helix</keyword>
<feature type="signal peptide" evidence="3">
    <location>
        <begin position="1"/>
        <end position="29"/>
    </location>
</feature>
<feature type="chain" id="PRO_0000332241" description="Nuclear envelope integral membrane protein 1b">
    <location>
        <begin position="30"/>
        <end position="434"/>
    </location>
</feature>
<feature type="transmembrane region" description="Helical" evidence="3">
    <location>
        <begin position="151"/>
        <end position="171"/>
    </location>
</feature>
<feature type="transmembrane region" description="Helical" evidence="3">
    <location>
        <begin position="175"/>
        <end position="195"/>
    </location>
</feature>
<feature type="transmembrane region" description="Helical" evidence="3">
    <location>
        <begin position="206"/>
        <end position="226"/>
    </location>
</feature>
<feature type="transmembrane region" description="Helical" evidence="3">
    <location>
        <begin position="239"/>
        <end position="259"/>
    </location>
</feature>
<feature type="transmembrane region" description="Helical" evidence="3">
    <location>
        <begin position="280"/>
        <end position="300"/>
    </location>
</feature>
<feature type="region of interest" description="A; required for its colocalization with lamins at the nuclear envelope" evidence="5">
    <location>
        <begin position="176"/>
        <end position="287"/>
    </location>
</feature>
<feature type="region of interest" description="Interaction with banf1-a and banf1-b" evidence="4">
    <location>
        <begin position="326"/>
        <end position="434"/>
    </location>
</feature>
<feature type="region of interest" description="B; interaction with ran" evidence="5">
    <location>
        <begin position="326"/>
        <end position="395"/>
    </location>
</feature>
<feature type="region of interest" description="BAF-binding site (BBS); essential for interaction with banf1-a, banf1-b and ran" evidence="4 5">
    <location>
        <begin position="368"/>
        <end position="375"/>
    </location>
</feature>
<feature type="short sequence motif" description="Nuclear localization signal" evidence="5">
    <location>
        <begin position="317"/>
        <end position="325"/>
    </location>
</feature>
<protein>
    <recommendedName>
        <fullName>Nuclear envelope integral membrane protein 1b</fullName>
    </recommendedName>
</protein>
<evidence type="ECO:0000250" key="1">
    <source>
        <dbReference type="UniProtKB" id="O14524"/>
    </source>
</evidence>
<evidence type="ECO:0000250" key="2">
    <source>
        <dbReference type="UniProtKB" id="Q6ZQE4"/>
    </source>
</evidence>
<evidence type="ECO:0000255" key="3"/>
<evidence type="ECO:0000269" key="4">
    <source>
    </source>
</evidence>
<evidence type="ECO:0000269" key="5">
    <source>
    </source>
</evidence>
<evidence type="ECO:0000305" key="6"/>
<name>NMP1B_XENLA</name>
<reference key="1">
    <citation type="journal article" date="2009" name="Dev. Biol.">
        <title>Involvement of an inner nuclear membrane protein, Nemp1, in Xenopus neural development through an interaction with the chromatin protein BAF.</title>
        <authorList>
            <person name="Mamada H."/>
            <person name="Takahashi N."/>
            <person name="Taira M."/>
        </authorList>
    </citation>
    <scope>NUCLEOTIDE SEQUENCE [MRNA]</scope>
    <scope>FUNCTION</scope>
    <scope>DISRUPTION PHENOTYPE</scope>
    <scope>DEVELOPMENTAL STAGE</scope>
    <scope>SUBCELLULAR LOCATION</scope>
    <scope>TOPOLOGY</scope>
    <scope>INTERACTION WITH BANF1-A AND BANF1-B</scope>
</reference>
<reference key="2">
    <citation type="submission" date="2006-12" db="EMBL/GenBank/DDBJ databases">
        <authorList>
            <consortium name="NIH - Xenopus Gene Collection (XGC) project"/>
        </authorList>
    </citation>
    <scope>NUCLEOTIDE SEQUENCE [LARGE SCALE MRNA]</scope>
    <source>
        <tissue>Embryo</tissue>
    </source>
</reference>
<reference key="3">
    <citation type="journal article" date="2015" name="PLoS ONE">
        <title>The inner nuclear membrane protein Nemp1 is a new type of RanGTP-binding protein in eukaryotes.</title>
        <authorList>
            <person name="Shibano T."/>
            <person name="Mamada H."/>
            <person name="Hakuno F."/>
            <person name="Takahashi S."/>
            <person name="Taira M."/>
        </authorList>
    </citation>
    <scope>FUNCTION</scope>
    <scope>SUBUNIT</scope>
    <scope>SUBCELLULAR LOCATION</scope>
    <scope>NUCLEAR LOCALIZATION SIGNAL</scope>
    <scope>INTERACTION WITH RAN</scope>
    <scope>PHOSPHORYLATION</scope>
</reference>
<organism>
    <name type="scientific">Xenopus laevis</name>
    <name type="common">African clawed frog</name>
    <dbReference type="NCBI Taxonomy" id="8355"/>
    <lineage>
        <taxon>Eukaryota</taxon>
        <taxon>Metazoa</taxon>
        <taxon>Chordata</taxon>
        <taxon>Craniata</taxon>
        <taxon>Vertebrata</taxon>
        <taxon>Euteleostomi</taxon>
        <taxon>Amphibia</taxon>
        <taxon>Batrachia</taxon>
        <taxon>Anura</taxon>
        <taxon>Pipoidea</taxon>
        <taxon>Pipidae</taxon>
        <taxon>Xenopodinae</taxon>
        <taxon>Xenopus</taxon>
        <taxon>Xenopus</taxon>
    </lineage>
</organism>
<dbReference type="EMBL" id="AB474920">
    <property type="protein sequence ID" value="BAH24056.1"/>
    <property type="molecule type" value="mRNA"/>
</dbReference>
<dbReference type="EMBL" id="BC130092">
    <property type="protein sequence ID" value="AAI30093.1"/>
    <property type="molecule type" value="mRNA"/>
</dbReference>
<dbReference type="RefSeq" id="NP_001091224.1">
    <property type="nucleotide sequence ID" value="NM_001097755.1"/>
</dbReference>
<dbReference type="BioGRID" id="674282">
    <property type="interactions" value="3"/>
</dbReference>
<dbReference type="IntAct" id="A1L3G9">
    <property type="interactions" value="3"/>
</dbReference>
<dbReference type="DNASU" id="100037004"/>
<dbReference type="GeneID" id="100037004"/>
<dbReference type="KEGG" id="xla:100037004"/>
<dbReference type="AGR" id="Xenbase:XB-GENE-974580"/>
<dbReference type="CTD" id="100037004"/>
<dbReference type="Xenbase" id="XB-GENE-974580">
    <property type="gene designation" value="nemp1.L"/>
</dbReference>
<dbReference type="OrthoDB" id="509138at2759"/>
<dbReference type="Proteomes" id="UP000186698">
    <property type="component" value="Chromosome 2L"/>
</dbReference>
<dbReference type="Bgee" id="100037004">
    <property type="expression patterns" value="Expressed in egg cell and 18 other cell types or tissues"/>
</dbReference>
<dbReference type="GO" id="GO:0005635">
    <property type="term" value="C:nuclear envelope"/>
    <property type="evidence" value="ECO:0000314"/>
    <property type="project" value="UniProtKB"/>
</dbReference>
<dbReference type="GO" id="GO:0005637">
    <property type="term" value="C:nuclear inner membrane"/>
    <property type="evidence" value="ECO:0000314"/>
    <property type="project" value="UniProtKB"/>
</dbReference>
<dbReference type="GO" id="GO:0043131">
    <property type="term" value="P:erythrocyte enucleation"/>
    <property type="evidence" value="ECO:0000250"/>
    <property type="project" value="UniProtKB"/>
</dbReference>
<dbReference type="GO" id="GO:0043249">
    <property type="term" value="P:erythrocyte maturation"/>
    <property type="evidence" value="ECO:0000250"/>
    <property type="project" value="UniProtKB"/>
</dbReference>
<dbReference type="GO" id="GO:0001654">
    <property type="term" value="P:eye development"/>
    <property type="evidence" value="ECO:0000315"/>
    <property type="project" value="UniProtKB"/>
</dbReference>
<dbReference type="InterPro" id="IPR019358">
    <property type="entry name" value="NEMP_fam"/>
</dbReference>
<dbReference type="PANTHER" id="PTHR13598">
    <property type="entry name" value="AT07567P-RELATED"/>
    <property type="match status" value="1"/>
</dbReference>
<dbReference type="PANTHER" id="PTHR13598:SF1">
    <property type="entry name" value="AT07567P-RELATED"/>
    <property type="match status" value="1"/>
</dbReference>
<dbReference type="Pfam" id="PF10225">
    <property type="entry name" value="NEMP"/>
    <property type="match status" value="1"/>
</dbReference>
<sequence length="434" mass="50327">MAGEVEGRGCGFSLGVLVTLLVLPLPSLCTLSTEKELHVIKLYEGRMVRYNESRNFCYQRTYEPKWSDVWTKIQIRINSTKMIRVTQVDNEEKLKEMETFNMFDFFSSFLKEKLNDTFIYVNLYSNKTCVKVHLTDTDTYYSVALSRGFDPRLFFVFLCGLLLFFYGDTLSRSQLFFYSTGITVGMLASMLILVFMLSKLMPKKSPFFALLLGGWSVSIYVIQLVFRNLQAICSEYWQYLIVYLGIVGFVSFAFCYIYGPLENERSINILNWTLQLIGLLLMYVSVQIQHIAVTIVVIAFCTKQIEYPVQWIYILYRKIKLKRAKPGPPRLLTEEEYRKQADVETRKALEELRECCSSPDFAAWKTISRIQSPKRFADFVEGSSHLTPNEVSVHEHEYGLGGSFLEDELFGEDSDVEEEMEIEPPLYPIPRSVF</sequence>
<accession>A1L3G9</accession>
<accession>B9X188</accession>
<comment type="function">
    <text evidence="1 2 4 5">In concert with ran, required for proper eye development (PubMed:25946333). May be involved in the expression of early eye marker genes (PubMed:19167377). Contributes to nuclear envelope stiffness in germ cells (By similarity). Required for fertility (By similarity). Essential for normal erythropoiesis (By similarity). Required for efficient nuclear envelope opening and enucleation during the late stages of erythroblast maturation (By similarity).</text>
</comment>
<comment type="subunit">
    <text evidence="4 5">Interacts with banf1-a and banf1-b. Interacts with ran-gtp.</text>
</comment>
<comment type="subcellular location">
    <subcellularLocation>
        <location evidence="4 5">Nucleus inner membrane</location>
        <topology evidence="3">Multi-pass membrane protein</topology>
        <orientation evidence="4">Nucleoplasmic side</orientation>
    </subcellularLocation>
    <subcellularLocation>
        <location evidence="4">Nucleus envelope</location>
    </subcellularLocation>
    <text evidence="4 5">Localization in the nuclear membrane is essential for its function. Colocalizes with lamins and banf1-a/b at the nuclear envelope.</text>
</comment>
<comment type="developmental stage">
    <text evidence="4">Expressed both maternally and zygotically. At the early gastrula stage, expressed mainly in the entire animal hemisphere. During neurulation, its expression becomes restricted to the anterior neuroectoderm. At the tailbud stage, expressed in various anterior regions including the anterior central nervous system (CNS), otic vesicles, and branchial arches.</text>
</comment>
<comment type="domain">
    <text evidence="5">The transmembrane domains are required and sufficient for its oligomerization.</text>
</comment>
<comment type="PTM">
    <text evidence="5">Phosphorylated.</text>
</comment>
<comment type="disruption phenotype">
    <text evidence="4 5">Morpholino knockdown results in defects in eye development, reduced expression of early eye marker genes rax, tbx3, six3 and pax6 and reduction of cell density at the neurula stage. Co-knockdown of nemp1b and ran elicits reduction of cell density and eye defects more significantly than the individual knockdown of either one.</text>
</comment>
<comment type="similarity">
    <text evidence="6">Belongs to the NEMP family.</text>
</comment>
<gene>
    <name type="primary">nemp1b</name>
    <name type="synonym">tmem194a-b</name>
</gene>